<sequence length="438" mass="45100">MSNSTQHWIAQRGTALQGSLTIPGDKSVSHRAVMFAALADGISKIDGFLEGEDTRSTAAIFAQLGVRIETPSASQRIVHGVGVDGLQPPQGPLDCGNAGTGMRLLAGVLAAQRFDSVLVGDASLSKRPMRRVTGPLAQMGARIETESDGTPPLRVHGGQALQGITFASPVASAQVKSAVLLAGLYATGETSVSEPHPTRDYTERMLSAFGVEIAFSPGQARLRGGQRLRATDIAVPADFSSAAFFIVAASIIPGSGVTLRAVGLNPRRTGLLAALRLMGADIVEDNHAEHGGEPVADLRVRYAPLRGAQIPEALVPDMIDEFPALFVAAAAARGDTVVSGAAELRVKESDRLAAMATGLRALGIVVDETPDGATIHGGTLGSGVIESHGDHRIAMAFAIAGQLSTGTVQVNDVANVATSFPGFDSLAQGAGFGLSARP</sequence>
<dbReference type="EC" id="2.5.1.19" evidence="1"/>
<dbReference type="EMBL" id="AE008922">
    <property type="protein sequence ID" value="AAM40886.1"/>
    <property type="molecule type" value="Genomic_DNA"/>
</dbReference>
<dbReference type="RefSeq" id="NP_636962.1">
    <property type="nucleotide sequence ID" value="NC_003902.1"/>
</dbReference>
<dbReference type="RefSeq" id="WP_011036773.1">
    <property type="nucleotide sequence ID" value="NC_003902.1"/>
</dbReference>
<dbReference type="SMR" id="Q8PA95"/>
<dbReference type="STRING" id="190485.XCC1591"/>
<dbReference type="EnsemblBacteria" id="AAM40886">
    <property type="protein sequence ID" value="AAM40886"/>
    <property type="gene ID" value="XCC1591"/>
</dbReference>
<dbReference type="KEGG" id="xcc:XCC1591"/>
<dbReference type="PATRIC" id="fig|190485.4.peg.1704"/>
<dbReference type="eggNOG" id="COG0128">
    <property type="taxonomic scope" value="Bacteria"/>
</dbReference>
<dbReference type="HOGENOM" id="CLU_024321_0_1_6"/>
<dbReference type="OrthoDB" id="9809920at2"/>
<dbReference type="UniPathway" id="UPA00053">
    <property type="reaction ID" value="UER00089"/>
</dbReference>
<dbReference type="Proteomes" id="UP000001010">
    <property type="component" value="Chromosome"/>
</dbReference>
<dbReference type="GO" id="GO:0005737">
    <property type="term" value="C:cytoplasm"/>
    <property type="evidence" value="ECO:0007669"/>
    <property type="project" value="UniProtKB-SubCell"/>
</dbReference>
<dbReference type="GO" id="GO:0003866">
    <property type="term" value="F:3-phosphoshikimate 1-carboxyvinyltransferase activity"/>
    <property type="evidence" value="ECO:0000318"/>
    <property type="project" value="GO_Central"/>
</dbReference>
<dbReference type="GO" id="GO:0008652">
    <property type="term" value="P:amino acid biosynthetic process"/>
    <property type="evidence" value="ECO:0007669"/>
    <property type="project" value="UniProtKB-KW"/>
</dbReference>
<dbReference type="GO" id="GO:0009073">
    <property type="term" value="P:aromatic amino acid family biosynthetic process"/>
    <property type="evidence" value="ECO:0007669"/>
    <property type="project" value="UniProtKB-KW"/>
</dbReference>
<dbReference type="GO" id="GO:0009423">
    <property type="term" value="P:chorismate biosynthetic process"/>
    <property type="evidence" value="ECO:0000318"/>
    <property type="project" value="GO_Central"/>
</dbReference>
<dbReference type="CDD" id="cd01556">
    <property type="entry name" value="EPSP_synthase"/>
    <property type="match status" value="1"/>
</dbReference>
<dbReference type="FunFam" id="3.65.10.10:FF:000005">
    <property type="entry name" value="3-phosphoshikimate 1-carboxyvinyltransferase"/>
    <property type="match status" value="1"/>
</dbReference>
<dbReference type="FunFam" id="3.65.10.10:FF:000006">
    <property type="entry name" value="3-phosphoshikimate 1-carboxyvinyltransferase"/>
    <property type="match status" value="1"/>
</dbReference>
<dbReference type="Gene3D" id="3.65.10.10">
    <property type="entry name" value="Enolpyruvate transferase domain"/>
    <property type="match status" value="2"/>
</dbReference>
<dbReference type="HAMAP" id="MF_00210">
    <property type="entry name" value="EPSP_synth"/>
    <property type="match status" value="1"/>
</dbReference>
<dbReference type="InterPro" id="IPR001986">
    <property type="entry name" value="Enolpyruvate_Tfrase_dom"/>
</dbReference>
<dbReference type="InterPro" id="IPR036968">
    <property type="entry name" value="Enolpyruvate_Tfrase_sf"/>
</dbReference>
<dbReference type="InterPro" id="IPR006264">
    <property type="entry name" value="EPSP_synthase"/>
</dbReference>
<dbReference type="InterPro" id="IPR023193">
    <property type="entry name" value="EPSP_synthase_CS"/>
</dbReference>
<dbReference type="InterPro" id="IPR013792">
    <property type="entry name" value="RNA3'P_cycl/enolpyr_Trfase_a/b"/>
</dbReference>
<dbReference type="NCBIfam" id="TIGR01356">
    <property type="entry name" value="aroA"/>
    <property type="match status" value="1"/>
</dbReference>
<dbReference type="PANTHER" id="PTHR21090">
    <property type="entry name" value="AROM/DEHYDROQUINATE SYNTHASE"/>
    <property type="match status" value="1"/>
</dbReference>
<dbReference type="PANTHER" id="PTHR21090:SF5">
    <property type="entry name" value="PENTAFUNCTIONAL AROM POLYPEPTIDE"/>
    <property type="match status" value="1"/>
</dbReference>
<dbReference type="Pfam" id="PF00275">
    <property type="entry name" value="EPSP_synthase"/>
    <property type="match status" value="1"/>
</dbReference>
<dbReference type="PIRSF" id="PIRSF000505">
    <property type="entry name" value="EPSPS"/>
    <property type="match status" value="1"/>
</dbReference>
<dbReference type="SUPFAM" id="SSF55205">
    <property type="entry name" value="EPT/RTPC-like"/>
    <property type="match status" value="1"/>
</dbReference>
<dbReference type="PROSITE" id="PS00104">
    <property type="entry name" value="EPSP_SYNTHASE_1"/>
    <property type="match status" value="1"/>
</dbReference>
<dbReference type="PROSITE" id="PS00885">
    <property type="entry name" value="EPSP_SYNTHASE_2"/>
    <property type="match status" value="1"/>
</dbReference>
<proteinExistence type="inferred from homology"/>
<reference key="1">
    <citation type="journal article" date="2002" name="Nature">
        <title>Comparison of the genomes of two Xanthomonas pathogens with differing host specificities.</title>
        <authorList>
            <person name="da Silva A.C.R."/>
            <person name="Ferro J.A."/>
            <person name="Reinach F.C."/>
            <person name="Farah C.S."/>
            <person name="Furlan L.R."/>
            <person name="Quaggio R.B."/>
            <person name="Monteiro-Vitorello C.B."/>
            <person name="Van Sluys M.A."/>
            <person name="Almeida N.F. Jr."/>
            <person name="Alves L.M.C."/>
            <person name="do Amaral A.M."/>
            <person name="Bertolini M.C."/>
            <person name="Camargo L.E.A."/>
            <person name="Camarotte G."/>
            <person name="Cannavan F."/>
            <person name="Cardozo J."/>
            <person name="Chambergo F."/>
            <person name="Ciapina L.P."/>
            <person name="Cicarelli R.M.B."/>
            <person name="Coutinho L.L."/>
            <person name="Cursino-Santos J.R."/>
            <person name="El-Dorry H."/>
            <person name="Faria J.B."/>
            <person name="Ferreira A.J.S."/>
            <person name="Ferreira R.C.C."/>
            <person name="Ferro M.I.T."/>
            <person name="Formighieri E.F."/>
            <person name="Franco M.C."/>
            <person name="Greggio C.C."/>
            <person name="Gruber A."/>
            <person name="Katsuyama A.M."/>
            <person name="Kishi L.T."/>
            <person name="Leite R.P."/>
            <person name="Lemos E.G.M."/>
            <person name="Lemos M.V.F."/>
            <person name="Locali E.C."/>
            <person name="Machado M.A."/>
            <person name="Madeira A.M.B.N."/>
            <person name="Martinez-Rossi N.M."/>
            <person name="Martins E.C."/>
            <person name="Meidanis J."/>
            <person name="Menck C.F.M."/>
            <person name="Miyaki C.Y."/>
            <person name="Moon D.H."/>
            <person name="Moreira L.M."/>
            <person name="Novo M.T.M."/>
            <person name="Okura V.K."/>
            <person name="Oliveira M.C."/>
            <person name="Oliveira V.R."/>
            <person name="Pereira H.A."/>
            <person name="Rossi A."/>
            <person name="Sena J.A.D."/>
            <person name="Silva C."/>
            <person name="de Souza R.F."/>
            <person name="Spinola L.A.F."/>
            <person name="Takita M.A."/>
            <person name="Tamura R.E."/>
            <person name="Teixeira E.C."/>
            <person name="Tezza R.I.D."/>
            <person name="Trindade dos Santos M."/>
            <person name="Truffi D."/>
            <person name="Tsai S.M."/>
            <person name="White F.F."/>
            <person name="Setubal J.C."/>
            <person name="Kitajima J.P."/>
        </authorList>
    </citation>
    <scope>NUCLEOTIDE SEQUENCE [LARGE SCALE GENOMIC DNA]</scope>
    <source>
        <strain>ATCC 33913 / DSM 3586 / NCPPB 528 / LMG 568 / P 25</strain>
    </source>
</reference>
<organism>
    <name type="scientific">Xanthomonas campestris pv. campestris (strain ATCC 33913 / DSM 3586 / NCPPB 528 / LMG 568 / P 25)</name>
    <dbReference type="NCBI Taxonomy" id="190485"/>
    <lineage>
        <taxon>Bacteria</taxon>
        <taxon>Pseudomonadati</taxon>
        <taxon>Pseudomonadota</taxon>
        <taxon>Gammaproteobacteria</taxon>
        <taxon>Lysobacterales</taxon>
        <taxon>Lysobacteraceae</taxon>
        <taxon>Xanthomonas</taxon>
    </lineage>
</organism>
<gene>
    <name evidence="1" type="primary">aroA</name>
    <name type="ordered locus">XCC1591</name>
</gene>
<name>AROA_XANCP</name>
<protein>
    <recommendedName>
        <fullName evidence="1">3-phosphoshikimate 1-carboxyvinyltransferase</fullName>
        <ecNumber evidence="1">2.5.1.19</ecNumber>
    </recommendedName>
    <alternativeName>
        <fullName evidence="1">5-enolpyruvylshikimate-3-phosphate synthase</fullName>
        <shortName evidence="1">EPSP synthase</shortName>
        <shortName evidence="1">EPSPS</shortName>
    </alternativeName>
</protein>
<keyword id="KW-0028">Amino-acid biosynthesis</keyword>
<keyword id="KW-0057">Aromatic amino acid biosynthesis</keyword>
<keyword id="KW-0963">Cytoplasm</keyword>
<keyword id="KW-1185">Reference proteome</keyword>
<keyword id="KW-0808">Transferase</keyword>
<feature type="chain" id="PRO_0000088318" description="3-phosphoshikimate 1-carboxyvinyltransferase">
    <location>
        <begin position="1"/>
        <end position="438"/>
    </location>
</feature>
<feature type="active site" description="Proton acceptor" evidence="1">
    <location>
        <position position="320"/>
    </location>
</feature>
<feature type="binding site" evidence="1">
    <location>
        <position position="26"/>
    </location>
    <ligand>
        <name>3-phosphoshikimate</name>
        <dbReference type="ChEBI" id="CHEBI:145989"/>
    </ligand>
</feature>
<feature type="binding site" evidence="1">
    <location>
        <position position="26"/>
    </location>
    <ligand>
        <name>phosphoenolpyruvate</name>
        <dbReference type="ChEBI" id="CHEBI:58702"/>
    </ligand>
</feature>
<feature type="binding site" evidence="1">
    <location>
        <position position="27"/>
    </location>
    <ligand>
        <name>3-phosphoshikimate</name>
        <dbReference type="ChEBI" id="CHEBI:145989"/>
    </ligand>
</feature>
<feature type="binding site" evidence="1">
    <location>
        <position position="31"/>
    </location>
    <ligand>
        <name>3-phosphoshikimate</name>
        <dbReference type="ChEBI" id="CHEBI:145989"/>
    </ligand>
</feature>
<feature type="binding site" evidence="1">
    <location>
        <position position="99"/>
    </location>
    <ligand>
        <name>phosphoenolpyruvate</name>
        <dbReference type="ChEBI" id="CHEBI:58702"/>
    </ligand>
</feature>
<feature type="binding site" evidence="1">
    <location>
        <position position="127"/>
    </location>
    <ligand>
        <name>phosphoenolpyruvate</name>
        <dbReference type="ChEBI" id="CHEBI:58702"/>
    </ligand>
</feature>
<feature type="binding site" evidence="1">
    <location>
        <position position="172"/>
    </location>
    <ligand>
        <name>3-phosphoshikimate</name>
        <dbReference type="ChEBI" id="CHEBI:145989"/>
    </ligand>
</feature>
<feature type="binding site" evidence="1">
    <location>
        <position position="174"/>
    </location>
    <ligand>
        <name>3-phosphoshikimate</name>
        <dbReference type="ChEBI" id="CHEBI:145989"/>
    </ligand>
</feature>
<feature type="binding site" evidence="1">
    <location>
        <position position="174"/>
    </location>
    <ligand>
        <name>phosphoenolpyruvate</name>
        <dbReference type="ChEBI" id="CHEBI:58702"/>
    </ligand>
</feature>
<feature type="binding site" evidence="1">
    <location>
        <position position="320"/>
    </location>
    <ligand>
        <name>3-phosphoshikimate</name>
        <dbReference type="ChEBI" id="CHEBI:145989"/>
    </ligand>
</feature>
<feature type="binding site" evidence="1">
    <location>
        <position position="347"/>
    </location>
    <ligand>
        <name>3-phosphoshikimate</name>
        <dbReference type="ChEBI" id="CHEBI:145989"/>
    </ligand>
</feature>
<feature type="binding site" evidence="1">
    <location>
        <position position="351"/>
    </location>
    <ligand>
        <name>phosphoenolpyruvate</name>
        <dbReference type="ChEBI" id="CHEBI:58702"/>
    </ligand>
</feature>
<feature type="binding site" evidence="1">
    <location>
        <position position="392"/>
    </location>
    <ligand>
        <name>phosphoenolpyruvate</name>
        <dbReference type="ChEBI" id="CHEBI:58702"/>
    </ligand>
</feature>
<comment type="function">
    <text evidence="1">Catalyzes the transfer of the enolpyruvyl moiety of phosphoenolpyruvate (PEP) to the 5-hydroxyl of shikimate-3-phosphate (S3P) to produce enolpyruvyl shikimate-3-phosphate and inorganic phosphate.</text>
</comment>
<comment type="catalytic activity">
    <reaction evidence="1">
        <text>3-phosphoshikimate + phosphoenolpyruvate = 5-O-(1-carboxyvinyl)-3-phosphoshikimate + phosphate</text>
        <dbReference type="Rhea" id="RHEA:21256"/>
        <dbReference type="ChEBI" id="CHEBI:43474"/>
        <dbReference type="ChEBI" id="CHEBI:57701"/>
        <dbReference type="ChEBI" id="CHEBI:58702"/>
        <dbReference type="ChEBI" id="CHEBI:145989"/>
        <dbReference type="EC" id="2.5.1.19"/>
    </reaction>
    <physiologicalReaction direction="left-to-right" evidence="1">
        <dbReference type="Rhea" id="RHEA:21257"/>
    </physiologicalReaction>
</comment>
<comment type="pathway">
    <text evidence="1">Metabolic intermediate biosynthesis; chorismate biosynthesis; chorismate from D-erythrose 4-phosphate and phosphoenolpyruvate: step 6/7.</text>
</comment>
<comment type="subunit">
    <text evidence="1">Monomer.</text>
</comment>
<comment type="subcellular location">
    <subcellularLocation>
        <location evidence="1">Cytoplasm</location>
    </subcellularLocation>
</comment>
<comment type="similarity">
    <text evidence="1">Belongs to the EPSP synthase family.</text>
</comment>
<evidence type="ECO:0000255" key="1">
    <source>
        <dbReference type="HAMAP-Rule" id="MF_00210"/>
    </source>
</evidence>
<accession>Q8PA95</accession>